<gene>
    <name evidence="1" type="primary">pepA</name>
    <name type="ordered locus">YpsIP31758_3543</name>
</gene>
<keyword id="KW-0031">Aminopeptidase</keyword>
<keyword id="KW-0963">Cytoplasm</keyword>
<keyword id="KW-0378">Hydrolase</keyword>
<keyword id="KW-0464">Manganese</keyword>
<keyword id="KW-0479">Metal-binding</keyword>
<keyword id="KW-0645">Protease</keyword>
<feature type="chain" id="PRO_1000058393" description="Probable cytosol aminopeptidase">
    <location>
        <begin position="1"/>
        <end position="503"/>
    </location>
</feature>
<feature type="active site" evidence="1">
    <location>
        <position position="282"/>
    </location>
</feature>
<feature type="active site" evidence="1">
    <location>
        <position position="356"/>
    </location>
</feature>
<feature type="binding site" evidence="1">
    <location>
        <position position="270"/>
    </location>
    <ligand>
        <name>Mn(2+)</name>
        <dbReference type="ChEBI" id="CHEBI:29035"/>
        <label>2</label>
    </ligand>
</feature>
<feature type="binding site" evidence="1">
    <location>
        <position position="275"/>
    </location>
    <ligand>
        <name>Mn(2+)</name>
        <dbReference type="ChEBI" id="CHEBI:29035"/>
        <label>1</label>
    </ligand>
</feature>
<feature type="binding site" evidence="1">
    <location>
        <position position="275"/>
    </location>
    <ligand>
        <name>Mn(2+)</name>
        <dbReference type="ChEBI" id="CHEBI:29035"/>
        <label>2</label>
    </ligand>
</feature>
<feature type="binding site" evidence="1">
    <location>
        <position position="293"/>
    </location>
    <ligand>
        <name>Mn(2+)</name>
        <dbReference type="ChEBI" id="CHEBI:29035"/>
        <label>2</label>
    </ligand>
</feature>
<feature type="binding site" evidence="1">
    <location>
        <position position="352"/>
    </location>
    <ligand>
        <name>Mn(2+)</name>
        <dbReference type="ChEBI" id="CHEBI:29035"/>
        <label>1</label>
    </ligand>
</feature>
<feature type="binding site" evidence="1">
    <location>
        <position position="354"/>
    </location>
    <ligand>
        <name>Mn(2+)</name>
        <dbReference type="ChEBI" id="CHEBI:29035"/>
        <label>1</label>
    </ligand>
</feature>
<feature type="binding site" evidence="1">
    <location>
        <position position="354"/>
    </location>
    <ligand>
        <name>Mn(2+)</name>
        <dbReference type="ChEBI" id="CHEBI:29035"/>
        <label>2</label>
    </ligand>
</feature>
<reference key="1">
    <citation type="journal article" date="2007" name="PLoS Genet.">
        <title>The complete genome sequence of Yersinia pseudotuberculosis IP31758, the causative agent of Far East scarlet-like fever.</title>
        <authorList>
            <person name="Eppinger M."/>
            <person name="Rosovitz M.J."/>
            <person name="Fricke W.F."/>
            <person name="Rasko D.A."/>
            <person name="Kokorina G."/>
            <person name="Fayolle C."/>
            <person name="Lindler L.E."/>
            <person name="Carniel E."/>
            <person name="Ravel J."/>
        </authorList>
    </citation>
    <scope>NUCLEOTIDE SEQUENCE [LARGE SCALE GENOMIC DNA]</scope>
    <source>
        <strain>IP 31758</strain>
    </source>
</reference>
<organism>
    <name type="scientific">Yersinia pseudotuberculosis serotype O:1b (strain IP 31758)</name>
    <dbReference type="NCBI Taxonomy" id="349747"/>
    <lineage>
        <taxon>Bacteria</taxon>
        <taxon>Pseudomonadati</taxon>
        <taxon>Pseudomonadota</taxon>
        <taxon>Gammaproteobacteria</taxon>
        <taxon>Enterobacterales</taxon>
        <taxon>Yersiniaceae</taxon>
        <taxon>Yersinia</taxon>
    </lineage>
</organism>
<name>AMPA_YERP3</name>
<protein>
    <recommendedName>
        <fullName evidence="1">Probable cytosol aminopeptidase</fullName>
        <ecNumber evidence="1">3.4.11.1</ecNumber>
    </recommendedName>
    <alternativeName>
        <fullName evidence="1">Leucine aminopeptidase</fullName>
        <shortName evidence="1">LAP</shortName>
        <ecNumber evidence="1">3.4.11.10</ecNumber>
    </alternativeName>
    <alternativeName>
        <fullName evidence="1">Leucyl aminopeptidase</fullName>
    </alternativeName>
</protein>
<dbReference type="EC" id="3.4.11.1" evidence="1"/>
<dbReference type="EC" id="3.4.11.10" evidence="1"/>
<dbReference type="EMBL" id="CP000720">
    <property type="protein sequence ID" value="ABS47624.1"/>
    <property type="molecule type" value="Genomic_DNA"/>
</dbReference>
<dbReference type="RefSeq" id="WP_002209310.1">
    <property type="nucleotide sequence ID" value="NC_009708.1"/>
</dbReference>
<dbReference type="SMR" id="A7FML9"/>
<dbReference type="MEROPS" id="M17.003"/>
<dbReference type="GeneID" id="57975268"/>
<dbReference type="KEGG" id="ypi:YpsIP31758_3543"/>
<dbReference type="HOGENOM" id="CLU_013734_2_2_6"/>
<dbReference type="Proteomes" id="UP000002412">
    <property type="component" value="Chromosome"/>
</dbReference>
<dbReference type="GO" id="GO:0005737">
    <property type="term" value="C:cytoplasm"/>
    <property type="evidence" value="ECO:0007669"/>
    <property type="project" value="UniProtKB-SubCell"/>
</dbReference>
<dbReference type="GO" id="GO:0030145">
    <property type="term" value="F:manganese ion binding"/>
    <property type="evidence" value="ECO:0007669"/>
    <property type="project" value="UniProtKB-UniRule"/>
</dbReference>
<dbReference type="GO" id="GO:0070006">
    <property type="term" value="F:metalloaminopeptidase activity"/>
    <property type="evidence" value="ECO:0007669"/>
    <property type="project" value="InterPro"/>
</dbReference>
<dbReference type="GO" id="GO:0006508">
    <property type="term" value="P:proteolysis"/>
    <property type="evidence" value="ECO:0007669"/>
    <property type="project" value="UniProtKB-KW"/>
</dbReference>
<dbReference type="CDD" id="cd00433">
    <property type="entry name" value="Peptidase_M17"/>
    <property type="match status" value="1"/>
</dbReference>
<dbReference type="FunFam" id="3.40.220.10:FF:000001">
    <property type="entry name" value="Probable cytosol aminopeptidase"/>
    <property type="match status" value="1"/>
</dbReference>
<dbReference type="FunFam" id="3.40.630.10:FF:000004">
    <property type="entry name" value="Probable cytosol aminopeptidase"/>
    <property type="match status" value="1"/>
</dbReference>
<dbReference type="Gene3D" id="3.40.220.10">
    <property type="entry name" value="Leucine Aminopeptidase, subunit E, domain 1"/>
    <property type="match status" value="1"/>
</dbReference>
<dbReference type="Gene3D" id="3.40.630.10">
    <property type="entry name" value="Zn peptidases"/>
    <property type="match status" value="1"/>
</dbReference>
<dbReference type="HAMAP" id="MF_00181">
    <property type="entry name" value="Cytosol_peptidase_M17"/>
    <property type="match status" value="1"/>
</dbReference>
<dbReference type="InterPro" id="IPR011356">
    <property type="entry name" value="Leucine_aapep/pepB"/>
</dbReference>
<dbReference type="InterPro" id="IPR043472">
    <property type="entry name" value="Macro_dom-like"/>
</dbReference>
<dbReference type="InterPro" id="IPR000819">
    <property type="entry name" value="Peptidase_M17_C"/>
</dbReference>
<dbReference type="InterPro" id="IPR023042">
    <property type="entry name" value="Peptidase_M17_leu_NH2_pept"/>
</dbReference>
<dbReference type="InterPro" id="IPR008283">
    <property type="entry name" value="Peptidase_M17_N"/>
</dbReference>
<dbReference type="NCBIfam" id="NF002072">
    <property type="entry name" value="PRK00913.1-1"/>
    <property type="match status" value="1"/>
</dbReference>
<dbReference type="NCBIfam" id="NF002074">
    <property type="entry name" value="PRK00913.1-4"/>
    <property type="match status" value="1"/>
</dbReference>
<dbReference type="PANTHER" id="PTHR11963:SF23">
    <property type="entry name" value="CYTOSOL AMINOPEPTIDASE"/>
    <property type="match status" value="1"/>
</dbReference>
<dbReference type="PANTHER" id="PTHR11963">
    <property type="entry name" value="LEUCINE AMINOPEPTIDASE-RELATED"/>
    <property type="match status" value="1"/>
</dbReference>
<dbReference type="Pfam" id="PF00883">
    <property type="entry name" value="Peptidase_M17"/>
    <property type="match status" value="1"/>
</dbReference>
<dbReference type="Pfam" id="PF02789">
    <property type="entry name" value="Peptidase_M17_N"/>
    <property type="match status" value="1"/>
</dbReference>
<dbReference type="PRINTS" id="PR00481">
    <property type="entry name" value="LAMNOPPTDASE"/>
</dbReference>
<dbReference type="SUPFAM" id="SSF52949">
    <property type="entry name" value="Macro domain-like"/>
    <property type="match status" value="1"/>
</dbReference>
<dbReference type="SUPFAM" id="SSF53187">
    <property type="entry name" value="Zn-dependent exopeptidases"/>
    <property type="match status" value="1"/>
</dbReference>
<dbReference type="PROSITE" id="PS00631">
    <property type="entry name" value="CYTOSOL_AP"/>
    <property type="match status" value="1"/>
</dbReference>
<evidence type="ECO:0000255" key="1">
    <source>
        <dbReference type="HAMAP-Rule" id="MF_00181"/>
    </source>
</evidence>
<proteinExistence type="inferred from homology"/>
<accession>A7FML9</accession>
<comment type="function">
    <text evidence="1">Presumably involved in the processing and regular turnover of intracellular proteins. Catalyzes the removal of unsubstituted N-terminal amino acids from various peptides.</text>
</comment>
<comment type="catalytic activity">
    <reaction evidence="1">
        <text>Release of an N-terminal amino acid, Xaa-|-Yaa-, in which Xaa is preferably Leu, but may be other amino acids including Pro although not Arg or Lys, and Yaa may be Pro. Amino acid amides and methyl esters are also readily hydrolyzed, but rates on arylamides are exceedingly low.</text>
        <dbReference type="EC" id="3.4.11.1"/>
    </reaction>
</comment>
<comment type="catalytic activity">
    <reaction evidence="1">
        <text>Release of an N-terminal amino acid, preferentially leucine, but not glutamic or aspartic acids.</text>
        <dbReference type="EC" id="3.4.11.10"/>
    </reaction>
</comment>
<comment type="cofactor">
    <cofactor evidence="1">
        <name>Mn(2+)</name>
        <dbReference type="ChEBI" id="CHEBI:29035"/>
    </cofactor>
    <text evidence="1">Binds 2 manganese ions per subunit.</text>
</comment>
<comment type="subcellular location">
    <subcellularLocation>
        <location evidence="1">Cytoplasm</location>
    </subcellularLocation>
</comment>
<comment type="similarity">
    <text evidence="1">Belongs to the peptidase M17 family.</text>
</comment>
<sequence length="503" mass="54797">MEFSVKSGSPEKQRSACIVVGVFEPRRLSPIAEQLDKISDGYISALLRRGELEGKVGQTLLLHHVPNILSERILLIGCGKERELDERQYKQVIQKTINTLNDTGSMEAVCFLTELHVKGRNTYWKVRQAVETAKETLYTFDQLKSNKTEPRRPLRKMVFNVPTRRELTSGERAIQHGLAIASGIKAAKDLGNMPPNICNAAYLASQARQLADAFSTNTVTRVIGEQQMKELGMHAYLAVGHGSQNESLMSVIEYKGNPNKDAKPIVLVGKGLTFDSGGISIKPAEGMDEMKYDMCGAATVYGVMRVVAELQLPLNVVGVLAGCENMPGGRAYRPGDILTTMSGQTVEVLNTDAEGRLVLCDALTYVERFEPELVIDIATLTGACVVALGNHLTGLMSNHNPLAHELIGASEQAGDRAWRLPLGEEYYEQLDSNFADMANIGGRAGGAITAGCFLSRFTRKYSWAHLDIAGTAWRSGKNKGATGRPVALLSQFLLNRAGLNGDD</sequence>